<dbReference type="EC" id="7.1.1.1"/>
<dbReference type="EMBL" id="X04195">
    <property type="protein sequence ID" value="CAB37090.1"/>
    <property type="molecule type" value="Genomic_DNA"/>
</dbReference>
<dbReference type="EMBL" id="X66086">
    <property type="protein sequence ID" value="CAA46885.1"/>
    <property type="molecule type" value="Genomic_DNA"/>
</dbReference>
<dbReference type="EMBL" id="U00096">
    <property type="protein sequence ID" value="AAC74674.1"/>
    <property type="molecule type" value="Genomic_DNA"/>
</dbReference>
<dbReference type="EMBL" id="AP009048">
    <property type="protein sequence ID" value="BAA15336.1"/>
    <property type="molecule type" value="Genomic_DNA"/>
</dbReference>
<dbReference type="PIR" id="S24381">
    <property type="entry name" value="DEECXB"/>
</dbReference>
<dbReference type="RefSeq" id="NP_416119.1">
    <property type="nucleotide sequence ID" value="NC_000913.3"/>
</dbReference>
<dbReference type="RefSeq" id="WP_000014036.1">
    <property type="nucleotide sequence ID" value="NZ_STEB01000003.1"/>
</dbReference>
<dbReference type="PDB" id="2BRU">
    <property type="method" value="NMR"/>
    <property type="chains" value="C=286-462"/>
</dbReference>
<dbReference type="PDBsum" id="2BRU"/>
<dbReference type="BMRB" id="P0AB67"/>
<dbReference type="SMR" id="P0AB67"/>
<dbReference type="BioGRID" id="4259125">
    <property type="interactions" value="34"/>
</dbReference>
<dbReference type="ComplexPortal" id="CPX-5623">
    <property type="entry name" value="NAD(P) transhydrogenase complex"/>
</dbReference>
<dbReference type="DIP" id="DIP-367N"/>
<dbReference type="FunCoup" id="P0AB67">
    <property type="interactions" value="155"/>
</dbReference>
<dbReference type="STRING" id="511145.b1602"/>
<dbReference type="TCDB" id="3.D.2.1.1">
    <property type="family name" value="the proton-translocating transhydrogenase (pth) family"/>
</dbReference>
<dbReference type="jPOST" id="P0AB67"/>
<dbReference type="PaxDb" id="511145-b1602"/>
<dbReference type="EnsemblBacteria" id="AAC74674">
    <property type="protein sequence ID" value="AAC74674"/>
    <property type="gene ID" value="b1602"/>
</dbReference>
<dbReference type="GeneID" id="93775750"/>
<dbReference type="GeneID" id="946144"/>
<dbReference type="KEGG" id="ecj:JW1594"/>
<dbReference type="KEGG" id="eco:b1602"/>
<dbReference type="KEGG" id="ecoc:C3026_09225"/>
<dbReference type="PATRIC" id="fig|1411691.4.peg.660"/>
<dbReference type="EchoBASE" id="EB0738"/>
<dbReference type="eggNOG" id="COG1282">
    <property type="taxonomic scope" value="Bacteria"/>
</dbReference>
<dbReference type="HOGENOM" id="CLU_007866_4_0_6"/>
<dbReference type="InParanoid" id="P0AB67"/>
<dbReference type="OMA" id="NDVVNPQ"/>
<dbReference type="OrthoDB" id="9763786at2"/>
<dbReference type="PhylomeDB" id="P0AB67"/>
<dbReference type="BioCyc" id="EcoCyc:PNTB-MONOMER"/>
<dbReference type="BioCyc" id="MetaCyc:PNTB-MONOMER"/>
<dbReference type="EvolutionaryTrace" id="P0AB67"/>
<dbReference type="PRO" id="PR:P0AB67"/>
<dbReference type="Proteomes" id="UP000000625">
    <property type="component" value="Chromosome"/>
</dbReference>
<dbReference type="GO" id="GO:0005886">
    <property type="term" value="C:plasma membrane"/>
    <property type="evidence" value="ECO:0000314"/>
    <property type="project" value="EcoCyc"/>
</dbReference>
<dbReference type="GO" id="GO:0050661">
    <property type="term" value="F:NADP binding"/>
    <property type="evidence" value="ECO:0007669"/>
    <property type="project" value="InterPro"/>
</dbReference>
<dbReference type="GO" id="GO:0008750">
    <property type="term" value="F:proton-translocating NAD(P)+ transhydrogenase activity"/>
    <property type="evidence" value="ECO:0000314"/>
    <property type="project" value="EcoCyc"/>
</dbReference>
<dbReference type="GO" id="GO:0006740">
    <property type="term" value="P:NADPH regeneration"/>
    <property type="evidence" value="ECO:0000314"/>
    <property type="project" value="ComplexPortal"/>
</dbReference>
<dbReference type="GO" id="GO:0120029">
    <property type="term" value="P:proton export across plasma membrane"/>
    <property type="evidence" value="ECO:0000314"/>
    <property type="project" value="ComplexPortal"/>
</dbReference>
<dbReference type="FunFam" id="3.40.50.1220:FF:000002">
    <property type="entry name" value="NAD(P) transhydrogenase subunit beta"/>
    <property type="match status" value="1"/>
</dbReference>
<dbReference type="Gene3D" id="3.40.50.1220">
    <property type="entry name" value="TPP-binding domain"/>
    <property type="match status" value="1"/>
</dbReference>
<dbReference type="InterPro" id="IPR029035">
    <property type="entry name" value="DHS-like_NAD/FAD-binding_dom"/>
</dbReference>
<dbReference type="InterPro" id="IPR012136">
    <property type="entry name" value="NADH_DH_b"/>
</dbReference>
<dbReference type="InterPro" id="IPR034300">
    <property type="entry name" value="PNTB-like"/>
</dbReference>
<dbReference type="NCBIfam" id="NF006974">
    <property type="entry name" value="PRK09444.1"/>
    <property type="match status" value="1"/>
</dbReference>
<dbReference type="PANTHER" id="PTHR44758">
    <property type="entry name" value="NAD(P) TRANSHYDROGENASE SUBUNIT BETA"/>
    <property type="match status" value="1"/>
</dbReference>
<dbReference type="PANTHER" id="PTHR44758:SF1">
    <property type="entry name" value="NAD(P) TRANSHYDROGENASE SUBUNIT BETA"/>
    <property type="match status" value="1"/>
</dbReference>
<dbReference type="Pfam" id="PF02233">
    <property type="entry name" value="PNTB"/>
    <property type="match status" value="1"/>
</dbReference>
<dbReference type="PIRSF" id="PIRSF000204">
    <property type="entry name" value="PNTB"/>
    <property type="match status" value="1"/>
</dbReference>
<dbReference type="SUPFAM" id="SSF52467">
    <property type="entry name" value="DHS-like NAD/FAD-binding domain"/>
    <property type="match status" value="1"/>
</dbReference>
<protein>
    <recommendedName>
        <fullName>NAD(P) transhydrogenase subunit beta</fullName>
        <ecNumber>7.1.1.1</ecNumber>
    </recommendedName>
    <alternativeName>
        <fullName>Nicotinamide nucleotide transhydrogenase subunit beta</fullName>
    </alternativeName>
    <alternativeName>
        <fullName>Pyridine nucleotide transhydrogenase subunit beta</fullName>
    </alternativeName>
</protein>
<evidence type="ECO:0000255" key="1"/>
<evidence type="ECO:0000305" key="2"/>
<evidence type="ECO:0007829" key="3">
    <source>
        <dbReference type="PDB" id="2BRU"/>
    </source>
</evidence>
<sequence length="462" mass="48723">MSGGLVTAAYIVAAILFIFSLAGLSKHETSRQGNNFGIAGMAIALIATIFGPDTGNVGWILLAMVIGGAIGIRLAKKVEMTEMPELVAILHSFVGLAAVLVGFNSYLHHDAGMAPILVNIHLTEVFLGIFIGAVTFTGSVVAFGKLCGKISSKPLMLPNRHKMNLAALVVSFLLLIVFVRTDSVGLQVLALLIMTAIALVFGWHLVASIGGADMPVVVSMLNSYSGWAAAAAGFMLSNDLLIVTGALVGSSGAILSYIMCKAMNRSFISVIAGGFGTDGSSTGDDQEVGEHREITAEETAELLKNSHSVIITPGYGMAVAQAQYPVAEITEKLRARGINVRFGIHPVAGRLPGHMNVLLAEAKVPYDIVLEMDEINDDFADTDTVLVIGANDTVNPAAQDDPKSPIAGMPVLEVWKAQNVIVFKRSMNTGYAGVQNPLFFKENTHMLFGDAKASVDAILKAL</sequence>
<comment type="function">
    <text>The transhydrogenation between NADH and NADP is coupled to respiration and ATP hydrolysis and functions as a proton pump across the membrane.</text>
</comment>
<comment type="catalytic activity">
    <reaction>
        <text>NAD(+) + NADPH + H(+)(in) = NADH + NADP(+) + H(+)(out)</text>
        <dbReference type="Rhea" id="RHEA:47992"/>
        <dbReference type="ChEBI" id="CHEBI:15378"/>
        <dbReference type="ChEBI" id="CHEBI:57540"/>
        <dbReference type="ChEBI" id="CHEBI:57783"/>
        <dbReference type="ChEBI" id="CHEBI:57945"/>
        <dbReference type="ChEBI" id="CHEBI:58349"/>
        <dbReference type="EC" id="7.1.1.1"/>
    </reaction>
</comment>
<comment type="subunit">
    <text>Heterodimer of an alpha and a beta chain.</text>
</comment>
<comment type="subcellular location">
    <subcellularLocation>
        <location>Cell inner membrane</location>
        <topology>Multi-pass membrane protein</topology>
    </subcellularLocation>
</comment>
<comment type="similarity">
    <text evidence="2">Belongs to the PNT beta subunit family.</text>
</comment>
<keyword id="KW-0002">3D-structure</keyword>
<keyword id="KW-0997">Cell inner membrane</keyword>
<keyword id="KW-1003">Cell membrane</keyword>
<keyword id="KW-0903">Direct protein sequencing</keyword>
<keyword id="KW-0472">Membrane</keyword>
<keyword id="KW-0520">NAD</keyword>
<keyword id="KW-0521">NADP</keyword>
<keyword id="KW-1185">Reference proteome</keyword>
<keyword id="KW-1278">Translocase</keyword>
<keyword id="KW-0812">Transmembrane</keyword>
<keyword id="KW-1133">Transmembrane helix</keyword>
<proteinExistence type="evidence at protein level"/>
<name>PNTB_ECOLI</name>
<organism>
    <name type="scientific">Escherichia coli (strain K12)</name>
    <dbReference type="NCBI Taxonomy" id="83333"/>
    <lineage>
        <taxon>Bacteria</taxon>
        <taxon>Pseudomonadati</taxon>
        <taxon>Pseudomonadota</taxon>
        <taxon>Gammaproteobacteria</taxon>
        <taxon>Enterobacterales</taxon>
        <taxon>Enterobacteriaceae</taxon>
        <taxon>Escherichia</taxon>
    </lineage>
</organism>
<accession>P0AB67</accession>
<accession>P07002</accession>
<accession>P76890</accession>
<feature type="chain" id="PRO_0000199023" description="NAD(P) transhydrogenase subunit beta">
    <location>
        <begin position="1"/>
        <end position="462"/>
    </location>
</feature>
<feature type="topological domain" description="Periplasmic" evidence="1">
    <location>
        <begin position="1"/>
        <end position="3"/>
    </location>
</feature>
<feature type="transmembrane region" description="Helical" evidence="1">
    <location>
        <begin position="4"/>
        <end position="24"/>
    </location>
</feature>
<feature type="topological domain" description="Cytoplasmic" evidence="1">
    <location>
        <begin position="25"/>
        <end position="45"/>
    </location>
</feature>
<feature type="transmembrane region" description="Helical" evidence="1">
    <location>
        <begin position="46"/>
        <end position="66"/>
    </location>
</feature>
<feature type="topological domain" description="Periplasmic" evidence="1">
    <location>
        <begin position="67"/>
        <end position="82"/>
    </location>
</feature>
<feature type="transmembrane region" description="Helical" evidence="1">
    <location>
        <begin position="83"/>
        <end position="103"/>
    </location>
</feature>
<feature type="topological domain" description="Cytoplasmic" evidence="1">
    <location>
        <begin position="104"/>
        <end position="115"/>
    </location>
</feature>
<feature type="transmembrane region" description="Helical" evidence="1">
    <location>
        <begin position="116"/>
        <end position="136"/>
    </location>
</feature>
<feature type="topological domain" description="Periplasmic" evidence="1">
    <location>
        <begin position="137"/>
        <end position="164"/>
    </location>
</feature>
<feature type="transmembrane region" description="Helical" evidence="1">
    <location>
        <begin position="165"/>
        <end position="185"/>
    </location>
</feature>
<feature type="topological domain" description="Cytoplasmic" evidence="1">
    <location>
        <begin position="186"/>
        <end position="188"/>
    </location>
</feature>
<feature type="transmembrane region" description="Helical" evidence="1">
    <location>
        <begin position="189"/>
        <end position="209"/>
    </location>
</feature>
<feature type="topological domain" description="Periplasmic" evidence="1">
    <location>
        <begin position="210"/>
        <end position="215"/>
    </location>
</feature>
<feature type="transmembrane region" description="Helical" evidence="1">
    <location>
        <begin position="216"/>
        <end position="236"/>
    </location>
</feature>
<feature type="topological domain" description="Cytoplasmic" evidence="1">
    <location>
        <begin position="237"/>
        <end position="239"/>
    </location>
</feature>
<feature type="transmembrane region" description="Helical" evidence="1">
    <location>
        <begin position="240"/>
        <end position="260"/>
    </location>
</feature>
<feature type="topological domain" description="Periplasmic" evidence="1">
    <location>
        <begin position="261"/>
        <end position="308"/>
    </location>
</feature>
<feature type="transmembrane region" description="Helical" evidence="1">
    <location>
        <begin position="309"/>
        <end position="329"/>
    </location>
</feature>
<feature type="topological domain" description="Cytoplasmic" evidence="1">
    <location>
        <begin position="330"/>
        <end position="462"/>
    </location>
</feature>
<feature type="helix" evidence="3">
    <location>
        <begin position="297"/>
        <end position="305"/>
    </location>
</feature>
<feature type="strand" evidence="3">
    <location>
        <begin position="307"/>
        <end position="312"/>
    </location>
</feature>
<feature type="helix" evidence="3">
    <location>
        <begin position="316"/>
        <end position="319"/>
    </location>
</feature>
<feature type="turn" evidence="3">
    <location>
        <begin position="320"/>
        <end position="322"/>
    </location>
</feature>
<feature type="helix" evidence="3">
    <location>
        <begin position="323"/>
        <end position="336"/>
    </location>
</feature>
<feature type="strand" evidence="3">
    <location>
        <begin position="339"/>
        <end position="344"/>
    </location>
</feature>
<feature type="strand" evidence="3">
    <location>
        <begin position="346"/>
        <end position="353"/>
    </location>
</feature>
<feature type="helix" evidence="3">
    <location>
        <begin position="355"/>
        <end position="362"/>
    </location>
</feature>
<feature type="turn" evidence="3">
    <location>
        <begin position="366"/>
        <end position="368"/>
    </location>
</feature>
<feature type="strand" evidence="3">
    <location>
        <begin position="369"/>
        <end position="372"/>
    </location>
</feature>
<feature type="helix" evidence="3">
    <location>
        <begin position="376"/>
        <end position="381"/>
    </location>
</feature>
<feature type="strand" evidence="3">
    <location>
        <begin position="383"/>
        <end position="387"/>
    </location>
</feature>
<feature type="helix" evidence="3">
    <location>
        <begin position="391"/>
        <end position="394"/>
    </location>
</feature>
<feature type="helix" evidence="3">
    <location>
        <begin position="396"/>
        <end position="398"/>
    </location>
</feature>
<feature type="strand" evidence="3">
    <location>
        <begin position="404"/>
        <end position="406"/>
    </location>
</feature>
<feature type="strand" evidence="3">
    <location>
        <begin position="417"/>
        <end position="423"/>
    </location>
</feature>
<feature type="strand" evidence="3">
    <location>
        <begin position="425"/>
        <end position="427"/>
    </location>
</feature>
<feature type="turn" evidence="3">
    <location>
        <begin position="437"/>
        <end position="439"/>
    </location>
</feature>
<feature type="strand" evidence="3">
    <location>
        <begin position="440"/>
        <end position="447"/>
    </location>
</feature>
<feature type="helix" evidence="3">
    <location>
        <begin position="451"/>
        <end position="461"/>
    </location>
</feature>
<reference key="1">
    <citation type="journal article" date="1986" name="Eur. J. Biochem.">
        <title>Nucleotide sequence of the pntA and pntB genes encoding the pyridine nucleotide transhydrogenase of Escherichia coli.</title>
        <authorList>
            <person name="Clarke D.M."/>
            <person name="Loo T.W."/>
            <person name="Gillam S."/>
            <person name="Bragg P.D."/>
        </authorList>
    </citation>
    <scope>NUCLEOTIDE SEQUENCE [GENOMIC DNA]</scope>
</reference>
<reference key="2">
    <citation type="journal article" date="1992" name="Eur. J. Biochem.">
        <title>A mutation at Gly314 of the beta subunit of the Escherichia coli pyridine nucleotide transhydrogenase abolishes activity and affects the NADP(H)-induced conformational change.</title>
        <authorList>
            <person name="Ahmad S."/>
            <person name="Glavas N.A."/>
            <person name="Bragg P.D."/>
        </authorList>
    </citation>
    <scope>SEQUENCE REVISION</scope>
</reference>
<reference key="3">
    <citation type="journal article" date="1996" name="DNA Res.">
        <title>A 570-kb DNA sequence of the Escherichia coli K-12 genome corresponding to the 28.0-40.1 min region on the linkage map.</title>
        <authorList>
            <person name="Aiba H."/>
            <person name="Baba T."/>
            <person name="Fujita K."/>
            <person name="Hayashi K."/>
            <person name="Inada T."/>
            <person name="Isono K."/>
            <person name="Itoh T."/>
            <person name="Kasai H."/>
            <person name="Kashimoto K."/>
            <person name="Kimura S."/>
            <person name="Kitakawa M."/>
            <person name="Kitagawa M."/>
            <person name="Makino K."/>
            <person name="Miki T."/>
            <person name="Mizobuchi K."/>
            <person name="Mori H."/>
            <person name="Mori T."/>
            <person name="Motomura K."/>
            <person name="Nakade S."/>
            <person name="Nakamura Y."/>
            <person name="Nashimoto H."/>
            <person name="Nishio Y."/>
            <person name="Oshima T."/>
            <person name="Saito N."/>
            <person name="Sampei G."/>
            <person name="Seki Y."/>
            <person name="Sivasundaram S."/>
            <person name="Tagami H."/>
            <person name="Takeda J."/>
            <person name="Takemoto K."/>
            <person name="Takeuchi Y."/>
            <person name="Wada C."/>
            <person name="Yamamoto Y."/>
            <person name="Horiuchi T."/>
        </authorList>
    </citation>
    <scope>NUCLEOTIDE SEQUENCE [LARGE SCALE GENOMIC DNA]</scope>
    <source>
        <strain>K12 / W3110 / ATCC 27325 / DSM 5911</strain>
    </source>
</reference>
<reference key="4">
    <citation type="journal article" date="1997" name="Science">
        <title>The complete genome sequence of Escherichia coli K-12.</title>
        <authorList>
            <person name="Blattner F.R."/>
            <person name="Plunkett G. III"/>
            <person name="Bloch C.A."/>
            <person name="Perna N.T."/>
            <person name="Burland V."/>
            <person name="Riley M."/>
            <person name="Collado-Vides J."/>
            <person name="Glasner J.D."/>
            <person name="Rode C.K."/>
            <person name="Mayhew G.F."/>
            <person name="Gregor J."/>
            <person name="Davis N.W."/>
            <person name="Kirkpatrick H.A."/>
            <person name="Goeden M.A."/>
            <person name="Rose D.J."/>
            <person name="Mau B."/>
            <person name="Shao Y."/>
        </authorList>
    </citation>
    <scope>NUCLEOTIDE SEQUENCE [LARGE SCALE GENOMIC DNA]</scope>
    <source>
        <strain>K12 / MG1655 / ATCC 47076</strain>
    </source>
</reference>
<reference key="5">
    <citation type="journal article" date="2006" name="Mol. Syst. Biol.">
        <title>Highly accurate genome sequences of Escherichia coli K-12 strains MG1655 and W3110.</title>
        <authorList>
            <person name="Hayashi K."/>
            <person name="Morooka N."/>
            <person name="Yamamoto Y."/>
            <person name="Fujita K."/>
            <person name="Isono K."/>
            <person name="Choi S."/>
            <person name="Ohtsubo E."/>
            <person name="Baba T."/>
            <person name="Wanner B.L."/>
            <person name="Mori H."/>
            <person name="Horiuchi T."/>
        </authorList>
    </citation>
    <scope>NUCLEOTIDE SEQUENCE [LARGE SCALE GENOMIC DNA]</scope>
    <source>
        <strain>K12 / W3110 / ATCC 27325 / DSM 5911</strain>
    </source>
</reference>
<reference key="6">
    <citation type="journal article" date="1991" name="Biochim. Biophys. Acta">
        <title>Topological analysis of the pyridine nucleotide transhydrogenase of Escherichia coli using proteolytic enzymes.</title>
        <authorList>
            <person name="Tong R.C."/>
            <person name="Glavas N.A."/>
            <person name="Bragg P.D."/>
        </authorList>
    </citation>
    <scope>PROTEIN SEQUENCE OF 266-277 AND 364-373</scope>
</reference>
<reference key="7">
    <citation type="journal article" date="2005" name="Science">
        <title>Global topology analysis of the Escherichia coli inner membrane proteome.</title>
        <authorList>
            <person name="Daley D.O."/>
            <person name="Rapp M."/>
            <person name="Granseth E."/>
            <person name="Melen K."/>
            <person name="Drew D."/>
            <person name="von Heijne G."/>
        </authorList>
    </citation>
    <scope>TOPOLOGY [LARGE SCALE ANALYSIS]</scope>
    <source>
        <strain>K12 / MG1655 / ATCC 47076</strain>
    </source>
</reference>
<gene>
    <name type="primary">pntB</name>
    <name type="ordered locus">b1602</name>
    <name type="ordered locus">JW1594</name>
</gene>